<gene>
    <name evidence="1" type="primary">rpl36</name>
</gene>
<accession>Q9BBQ2</accession>
<evidence type="ECO:0000255" key="1">
    <source>
        <dbReference type="HAMAP-Rule" id="MF_00251"/>
    </source>
</evidence>
<evidence type="ECO:0000305" key="2"/>
<protein>
    <recommendedName>
        <fullName evidence="1">Large ribosomal subunit protein bL36c</fullName>
    </recommendedName>
    <alternativeName>
        <fullName evidence="2">50S ribosomal protein L36, chloroplastic</fullName>
    </alternativeName>
</protein>
<sequence length="37" mass="4361">MKIGASVRKICEKCRLIRRRGRIIVICSNPRHKQRQG</sequence>
<dbReference type="EMBL" id="AP002983">
    <property type="protein sequence ID" value="BAB33230.1"/>
    <property type="molecule type" value="Genomic_DNA"/>
</dbReference>
<dbReference type="RefSeq" id="NP_084831.1">
    <property type="nucleotide sequence ID" value="NC_002694.1"/>
</dbReference>
<dbReference type="SMR" id="Q9BBQ2"/>
<dbReference type="GeneID" id="802889"/>
<dbReference type="GO" id="GO:0009507">
    <property type="term" value="C:chloroplast"/>
    <property type="evidence" value="ECO:0007669"/>
    <property type="project" value="UniProtKB-SubCell"/>
</dbReference>
<dbReference type="GO" id="GO:1990904">
    <property type="term" value="C:ribonucleoprotein complex"/>
    <property type="evidence" value="ECO:0007669"/>
    <property type="project" value="UniProtKB-KW"/>
</dbReference>
<dbReference type="GO" id="GO:0005840">
    <property type="term" value="C:ribosome"/>
    <property type="evidence" value="ECO:0007669"/>
    <property type="project" value="UniProtKB-KW"/>
</dbReference>
<dbReference type="GO" id="GO:0003735">
    <property type="term" value="F:structural constituent of ribosome"/>
    <property type="evidence" value="ECO:0007669"/>
    <property type="project" value="InterPro"/>
</dbReference>
<dbReference type="GO" id="GO:0006412">
    <property type="term" value="P:translation"/>
    <property type="evidence" value="ECO:0007669"/>
    <property type="project" value="UniProtKB-UniRule"/>
</dbReference>
<dbReference type="HAMAP" id="MF_00251">
    <property type="entry name" value="Ribosomal_bL36"/>
    <property type="match status" value="1"/>
</dbReference>
<dbReference type="InterPro" id="IPR000473">
    <property type="entry name" value="Ribosomal_bL36"/>
</dbReference>
<dbReference type="InterPro" id="IPR035977">
    <property type="entry name" value="Ribosomal_bL36_sp"/>
</dbReference>
<dbReference type="NCBIfam" id="TIGR01022">
    <property type="entry name" value="rpmJ_bact"/>
    <property type="match status" value="1"/>
</dbReference>
<dbReference type="PANTHER" id="PTHR42888">
    <property type="entry name" value="50S RIBOSOMAL PROTEIN L36, CHLOROPLASTIC"/>
    <property type="match status" value="1"/>
</dbReference>
<dbReference type="PANTHER" id="PTHR42888:SF1">
    <property type="entry name" value="LARGE RIBOSOMAL SUBUNIT PROTEIN BL36C"/>
    <property type="match status" value="1"/>
</dbReference>
<dbReference type="Pfam" id="PF00444">
    <property type="entry name" value="Ribosomal_L36"/>
    <property type="match status" value="1"/>
</dbReference>
<dbReference type="SUPFAM" id="SSF57840">
    <property type="entry name" value="Ribosomal protein L36"/>
    <property type="match status" value="1"/>
</dbReference>
<dbReference type="PROSITE" id="PS00828">
    <property type="entry name" value="RIBOSOMAL_L36"/>
    <property type="match status" value="1"/>
</dbReference>
<name>RK36_LOTJA</name>
<organism>
    <name type="scientific">Lotus japonicus</name>
    <name type="common">Lotus corniculatus var. japonicus</name>
    <dbReference type="NCBI Taxonomy" id="34305"/>
    <lineage>
        <taxon>Eukaryota</taxon>
        <taxon>Viridiplantae</taxon>
        <taxon>Streptophyta</taxon>
        <taxon>Embryophyta</taxon>
        <taxon>Tracheophyta</taxon>
        <taxon>Spermatophyta</taxon>
        <taxon>Magnoliopsida</taxon>
        <taxon>eudicotyledons</taxon>
        <taxon>Gunneridae</taxon>
        <taxon>Pentapetalae</taxon>
        <taxon>rosids</taxon>
        <taxon>fabids</taxon>
        <taxon>Fabales</taxon>
        <taxon>Fabaceae</taxon>
        <taxon>Papilionoideae</taxon>
        <taxon>50 kb inversion clade</taxon>
        <taxon>NPAAA clade</taxon>
        <taxon>Hologalegina</taxon>
        <taxon>robinioid clade</taxon>
        <taxon>Loteae</taxon>
        <taxon>Lotus</taxon>
    </lineage>
</organism>
<keyword id="KW-0150">Chloroplast</keyword>
<keyword id="KW-0934">Plastid</keyword>
<keyword id="KW-0687">Ribonucleoprotein</keyword>
<keyword id="KW-0689">Ribosomal protein</keyword>
<reference key="1">
    <citation type="journal article" date="2000" name="DNA Res.">
        <title>Complete structure of the chloroplast genome of a legume, Lotus japonicus.</title>
        <authorList>
            <person name="Kato T."/>
            <person name="Kaneko T."/>
            <person name="Sato S."/>
            <person name="Nakamura Y."/>
            <person name="Tabata S."/>
        </authorList>
    </citation>
    <scope>NUCLEOTIDE SEQUENCE [LARGE SCALE GENOMIC DNA]</scope>
    <source>
        <strain>cv. Miyakojima MG-20</strain>
    </source>
</reference>
<proteinExistence type="inferred from homology"/>
<comment type="subcellular location">
    <subcellularLocation>
        <location>Plastid</location>
        <location>Chloroplast</location>
    </subcellularLocation>
</comment>
<comment type="similarity">
    <text evidence="1">Belongs to the bacterial ribosomal protein bL36 family.</text>
</comment>
<geneLocation type="chloroplast"/>
<feature type="chain" id="PRO_0000126324" description="Large ribosomal subunit protein bL36c">
    <location>
        <begin position="1"/>
        <end position="37"/>
    </location>
</feature>